<protein>
    <recommendedName>
        <fullName evidence="1">6,7-dimethyl-8-ribityllumazine synthase</fullName>
        <shortName evidence="1">DMRL synthase</shortName>
        <shortName evidence="1">LS</shortName>
        <shortName evidence="1">Lumazine synthase</shortName>
        <ecNumber evidence="1">2.5.1.78</ecNumber>
    </recommendedName>
</protein>
<feature type="chain" id="PRO_1000040355" description="6,7-dimethyl-8-ribityllumazine synthase">
    <location>
        <begin position="1"/>
        <end position="154"/>
    </location>
</feature>
<feature type="active site" description="Proton donor" evidence="1">
    <location>
        <position position="92"/>
    </location>
</feature>
<feature type="binding site" evidence="1">
    <location>
        <position position="26"/>
    </location>
    <ligand>
        <name>5-amino-6-(D-ribitylamino)uracil</name>
        <dbReference type="ChEBI" id="CHEBI:15934"/>
    </ligand>
</feature>
<feature type="binding site" evidence="1">
    <location>
        <begin position="60"/>
        <end position="62"/>
    </location>
    <ligand>
        <name>5-amino-6-(D-ribitylamino)uracil</name>
        <dbReference type="ChEBI" id="CHEBI:15934"/>
    </ligand>
</feature>
<feature type="binding site" evidence="1">
    <location>
        <begin position="84"/>
        <end position="86"/>
    </location>
    <ligand>
        <name>5-amino-6-(D-ribitylamino)uracil</name>
        <dbReference type="ChEBI" id="CHEBI:15934"/>
    </ligand>
</feature>
<feature type="binding site" evidence="1">
    <location>
        <begin position="89"/>
        <end position="90"/>
    </location>
    <ligand>
        <name>(2S)-2-hydroxy-3-oxobutyl phosphate</name>
        <dbReference type="ChEBI" id="CHEBI:58830"/>
    </ligand>
</feature>
<feature type="binding site" evidence="1">
    <location>
        <position position="117"/>
    </location>
    <ligand>
        <name>5-amino-6-(D-ribitylamino)uracil</name>
        <dbReference type="ChEBI" id="CHEBI:15934"/>
    </ligand>
</feature>
<feature type="binding site" evidence="1">
    <location>
        <position position="131"/>
    </location>
    <ligand>
        <name>(2S)-2-hydroxy-3-oxobutyl phosphate</name>
        <dbReference type="ChEBI" id="CHEBI:58830"/>
    </ligand>
</feature>
<organism>
    <name type="scientific">Paracidovorax citrulli (strain AAC00-1)</name>
    <name type="common">Acidovorax citrulli</name>
    <dbReference type="NCBI Taxonomy" id="397945"/>
    <lineage>
        <taxon>Bacteria</taxon>
        <taxon>Pseudomonadati</taxon>
        <taxon>Pseudomonadota</taxon>
        <taxon>Betaproteobacteria</taxon>
        <taxon>Burkholderiales</taxon>
        <taxon>Comamonadaceae</taxon>
        <taxon>Paracidovorax</taxon>
    </lineage>
</organism>
<proteinExistence type="inferred from homology"/>
<accession>A1TPC1</accession>
<keyword id="KW-0686">Riboflavin biosynthesis</keyword>
<keyword id="KW-0808">Transferase</keyword>
<gene>
    <name evidence="1" type="primary">ribH</name>
    <name type="ordered locus">Aave_2231</name>
</gene>
<evidence type="ECO:0000255" key="1">
    <source>
        <dbReference type="HAMAP-Rule" id="MF_00178"/>
    </source>
</evidence>
<sequence>MFGADKGTADRLDGRKLHIGIVQARFNEGITEALAAACREELLALGVQEKNIRHVRVPGALEVPLALQALAEQDEYDALIALGCIIRGETYHFELVANESGAGVTRVSLDTQTPIANAILTTENLEQAVARQTEKGRDAARVAVEMANLLEELS</sequence>
<dbReference type="EC" id="2.5.1.78" evidence="1"/>
<dbReference type="EMBL" id="CP000512">
    <property type="protein sequence ID" value="ABM32809.1"/>
    <property type="molecule type" value="Genomic_DNA"/>
</dbReference>
<dbReference type="RefSeq" id="WP_011795345.1">
    <property type="nucleotide sequence ID" value="NC_008752.1"/>
</dbReference>
<dbReference type="SMR" id="A1TPC1"/>
<dbReference type="STRING" id="397945.Aave_2231"/>
<dbReference type="KEGG" id="aav:Aave_2231"/>
<dbReference type="eggNOG" id="COG0054">
    <property type="taxonomic scope" value="Bacteria"/>
</dbReference>
<dbReference type="HOGENOM" id="CLU_089358_1_2_4"/>
<dbReference type="OrthoDB" id="9809709at2"/>
<dbReference type="UniPathway" id="UPA00275">
    <property type="reaction ID" value="UER00404"/>
</dbReference>
<dbReference type="Proteomes" id="UP000002596">
    <property type="component" value="Chromosome"/>
</dbReference>
<dbReference type="GO" id="GO:0005829">
    <property type="term" value="C:cytosol"/>
    <property type="evidence" value="ECO:0007669"/>
    <property type="project" value="TreeGrafter"/>
</dbReference>
<dbReference type="GO" id="GO:0009349">
    <property type="term" value="C:riboflavin synthase complex"/>
    <property type="evidence" value="ECO:0007669"/>
    <property type="project" value="InterPro"/>
</dbReference>
<dbReference type="GO" id="GO:0000906">
    <property type="term" value="F:6,7-dimethyl-8-ribityllumazine synthase activity"/>
    <property type="evidence" value="ECO:0007669"/>
    <property type="project" value="UniProtKB-UniRule"/>
</dbReference>
<dbReference type="GO" id="GO:0009231">
    <property type="term" value="P:riboflavin biosynthetic process"/>
    <property type="evidence" value="ECO:0007669"/>
    <property type="project" value="UniProtKB-UniRule"/>
</dbReference>
<dbReference type="CDD" id="cd09209">
    <property type="entry name" value="Lumazine_synthase-I"/>
    <property type="match status" value="1"/>
</dbReference>
<dbReference type="Gene3D" id="3.40.50.960">
    <property type="entry name" value="Lumazine/riboflavin synthase"/>
    <property type="match status" value="1"/>
</dbReference>
<dbReference type="HAMAP" id="MF_00178">
    <property type="entry name" value="Lumazine_synth"/>
    <property type="match status" value="1"/>
</dbReference>
<dbReference type="InterPro" id="IPR034964">
    <property type="entry name" value="LS"/>
</dbReference>
<dbReference type="InterPro" id="IPR002180">
    <property type="entry name" value="LS/RS"/>
</dbReference>
<dbReference type="InterPro" id="IPR036467">
    <property type="entry name" value="LS/RS_sf"/>
</dbReference>
<dbReference type="NCBIfam" id="TIGR00114">
    <property type="entry name" value="lumazine-synth"/>
    <property type="match status" value="1"/>
</dbReference>
<dbReference type="PANTHER" id="PTHR21058:SF0">
    <property type="entry name" value="6,7-DIMETHYL-8-RIBITYLLUMAZINE SYNTHASE"/>
    <property type="match status" value="1"/>
</dbReference>
<dbReference type="PANTHER" id="PTHR21058">
    <property type="entry name" value="6,7-DIMETHYL-8-RIBITYLLUMAZINE SYNTHASE DMRL SYNTHASE LUMAZINE SYNTHASE"/>
    <property type="match status" value="1"/>
</dbReference>
<dbReference type="Pfam" id="PF00885">
    <property type="entry name" value="DMRL_synthase"/>
    <property type="match status" value="1"/>
</dbReference>
<dbReference type="SUPFAM" id="SSF52121">
    <property type="entry name" value="Lumazine synthase"/>
    <property type="match status" value="1"/>
</dbReference>
<reference key="1">
    <citation type="submission" date="2006-12" db="EMBL/GenBank/DDBJ databases">
        <title>Complete sequence of Acidovorax avenae subsp. citrulli AAC00-1.</title>
        <authorList>
            <person name="Copeland A."/>
            <person name="Lucas S."/>
            <person name="Lapidus A."/>
            <person name="Barry K."/>
            <person name="Detter J.C."/>
            <person name="Glavina del Rio T."/>
            <person name="Dalin E."/>
            <person name="Tice H."/>
            <person name="Pitluck S."/>
            <person name="Kiss H."/>
            <person name="Brettin T."/>
            <person name="Bruce D."/>
            <person name="Han C."/>
            <person name="Tapia R."/>
            <person name="Gilna P."/>
            <person name="Schmutz J."/>
            <person name="Larimer F."/>
            <person name="Land M."/>
            <person name="Hauser L."/>
            <person name="Kyrpides N."/>
            <person name="Kim E."/>
            <person name="Stahl D."/>
            <person name="Richardson P."/>
        </authorList>
    </citation>
    <scope>NUCLEOTIDE SEQUENCE [LARGE SCALE GENOMIC DNA]</scope>
    <source>
        <strain>AAC00-1</strain>
    </source>
</reference>
<name>RISB_PARC0</name>
<comment type="function">
    <text evidence="1">Catalyzes the formation of 6,7-dimethyl-8-ribityllumazine by condensation of 5-amino-6-(D-ribitylamino)uracil with 3,4-dihydroxy-2-butanone 4-phosphate. This is the penultimate step in the biosynthesis of riboflavin.</text>
</comment>
<comment type="catalytic activity">
    <reaction evidence="1">
        <text>(2S)-2-hydroxy-3-oxobutyl phosphate + 5-amino-6-(D-ribitylamino)uracil = 6,7-dimethyl-8-(1-D-ribityl)lumazine + phosphate + 2 H2O + H(+)</text>
        <dbReference type="Rhea" id="RHEA:26152"/>
        <dbReference type="ChEBI" id="CHEBI:15377"/>
        <dbReference type="ChEBI" id="CHEBI:15378"/>
        <dbReference type="ChEBI" id="CHEBI:15934"/>
        <dbReference type="ChEBI" id="CHEBI:43474"/>
        <dbReference type="ChEBI" id="CHEBI:58201"/>
        <dbReference type="ChEBI" id="CHEBI:58830"/>
        <dbReference type="EC" id="2.5.1.78"/>
    </reaction>
</comment>
<comment type="pathway">
    <text evidence="1">Cofactor biosynthesis; riboflavin biosynthesis; riboflavin from 2-hydroxy-3-oxobutyl phosphate and 5-amino-6-(D-ribitylamino)uracil: step 1/2.</text>
</comment>
<comment type="similarity">
    <text evidence="1">Belongs to the DMRL synthase family.</text>
</comment>